<evidence type="ECO:0000250" key="1">
    <source>
        <dbReference type="UniProtKB" id="A0A067SLB9"/>
    </source>
</evidence>
<evidence type="ECO:0000303" key="2">
    <source>
    </source>
</evidence>
<evidence type="ECO:0000305" key="3"/>
<evidence type="ECO:0000305" key="4">
    <source>
    </source>
</evidence>
<accession>A0A023IWM5</accession>
<comment type="function">
    <text evidence="4">Probable toxin that belongs to the MSDIN-like toxin family responsible for a large number of food poisoning cases and deaths (PubMed:24613547).</text>
</comment>
<comment type="PTM">
    <text evidence="1">Processed by the macrocyclase-peptidase enzyme POPB to yield a toxic cyclic octapeptide (By similarity). POPB first removes 10 residues from the N-terminus (By similarity). Conformational trapping of the remaining peptide forces the enzyme to release this intermediate rather than proceed to macrocyclization (By similarity). The enzyme rebinds the remaining peptide in a different conformation and catalyzes macrocyclization of the N-terminal 8 residues (By similarity).</text>
</comment>
<comment type="similarity">
    <text evidence="3">Belongs to the MSDIN fungal toxin family.</text>
</comment>
<dbReference type="EMBL" id="KF552082">
    <property type="protein sequence ID" value="AHB18710.1"/>
    <property type="molecule type" value="Genomic_DNA"/>
</dbReference>
<dbReference type="SMR" id="A0A023IWM5"/>
<dbReference type="GO" id="GO:0090729">
    <property type="term" value="F:toxin activity"/>
    <property type="evidence" value="ECO:0007669"/>
    <property type="project" value="UniProtKB-KW"/>
</dbReference>
<dbReference type="InterPro" id="IPR027582">
    <property type="entry name" value="Amanitin/phalloidin"/>
</dbReference>
<dbReference type="NCBIfam" id="TIGR04309">
    <property type="entry name" value="amanitin"/>
    <property type="match status" value="1"/>
</dbReference>
<sequence>MSDINATRLPIILAPIIPCINDDVNSTLTSGER</sequence>
<keyword id="KW-0800">Toxin</keyword>
<reference key="1">
    <citation type="journal article" date="2014" name="Toxicon">
        <title>The molecular diversity of toxin gene families in lethal Amanita mushrooms.</title>
        <authorList>
            <person name="Li P."/>
            <person name="Deng W."/>
            <person name="Li T."/>
        </authorList>
    </citation>
    <scope>NUCLEOTIDE SEQUENCE [GENOMIC DNA]</scope>
    <scope>FUNCTION</scope>
</reference>
<feature type="propeptide" id="PRO_0000443674" evidence="4">
    <location>
        <begin position="1"/>
        <end position="10"/>
    </location>
</feature>
<feature type="peptide" id="PRO_0000443675" description="Toxin MSD2" evidence="4">
    <location>
        <begin position="11"/>
        <end position="18"/>
    </location>
</feature>
<feature type="propeptide" id="PRO_0000443676" evidence="4">
    <location>
        <begin position="19"/>
        <end position="33"/>
    </location>
</feature>
<feature type="cross-link" description="Cyclopeptide (Ile-Pro)" evidence="4">
    <location>
        <begin position="11"/>
        <end position="18"/>
    </location>
</feature>
<organism>
    <name type="scientific">Amanita phalloides</name>
    <name type="common">Death cap</name>
    <dbReference type="NCBI Taxonomy" id="67723"/>
    <lineage>
        <taxon>Eukaryota</taxon>
        <taxon>Fungi</taxon>
        <taxon>Dikarya</taxon>
        <taxon>Basidiomycota</taxon>
        <taxon>Agaricomycotina</taxon>
        <taxon>Agaricomycetes</taxon>
        <taxon>Agaricomycetidae</taxon>
        <taxon>Agaricales</taxon>
        <taxon>Pluteineae</taxon>
        <taxon>Amanitaceae</taxon>
        <taxon>Amanita</taxon>
    </lineage>
</organism>
<protein>
    <recommendedName>
        <fullName evidence="2">MSDIN-like toxin proprotein 2</fullName>
    </recommendedName>
    <component>
        <recommendedName>
            <fullName evidence="4">Toxin MSD2</fullName>
        </recommendedName>
    </component>
</protein>
<name>MSD2_AMAPH</name>
<proteinExistence type="inferred from homology"/>